<dbReference type="EC" id="2.1.1.189" evidence="1"/>
<dbReference type="EMBL" id="AM286415">
    <property type="protein sequence ID" value="CAL11576.1"/>
    <property type="molecule type" value="Genomic_DNA"/>
</dbReference>
<dbReference type="RefSeq" id="WP_011816017.1">
    <property type="nucleotide sequence ID" value="NC_008800.1"/>
</dbReference>
<dbReference type="RefSeq" id="YP_001005793.1">
    <property type="nucleotide sequence ID" value="NC_008800.1"/>
</dbReference>
<dbReference type="SMR" id="A1JM74"/>
<dbReference type="KEGG" id="yen:YE1490"/>
<dbReference type="PATRIC" id="fig|393305.7.peg.1619"/>
<dbReference type="eggNOG" id="COG2265">
    <property type="taxonomic scope" value="Bacteria"/>
</dbReference>
<dbReference type="HOGENOM" id="CLU_014689_0_0_6"/>
<dbReference type="OrthoDB" id="9804590at2"/>
<dbReference type="Proteomes" id="UP000000642">
    <property type="component" value="Chromosome"/>
</dbReference>
<dbReference type="GO" id="GO:0051539">
    <property type="term" value="F:4 iron, 4 sulfur cluster binding"/>
    <property type="evidence" value="ECO:0007669"/>
    <property type="project" value="UniProtKB-KW"/>
</dbReference>
<dbReference type="GO" id="GO:0005506">
    <property type="term" value="F:iron ion binding"/>
    <property type="evidence" value="ECO:0007669"/>
    <property type="project" value="UniProtKB-UniRule"/>
</dbReference>
<dbReference type="GO" id="GO:0070041">
    <property type="term" value="F:rRNA (uridine-C5-)-methyltransferase activity"/>
    <property type="evidence" value="ECO:0007669"/>
    <property type="project" value="UniProtKB-UniRule"/>
</dbReference>
<dbReference type="GO" id="GO:0070475">
    <property type="term" value="P:rRNA base methylation"/>
    <property type="evidence" value="ECO:0007669"/>
    <property type="project" value="TreeGrafter"/>
</dbReference>
<dbReference type="CDD" id="cd02440">
    <property type="entry name" value="AdoMet_MTases"/>
    <property type="match status" value="1"/>
</dbReference>
<dbReference type="FunFam" id="2.40.50.1070:FF:000002">
    <property type="entry name" value="23S rRNA (uracil(747)-C(5))-methyltransferase RlmC"/>
    <property type="match status" value="1"/>
</dbReference>
<dbReference type="Gene3D" id="2.40.50.1070">
    <property type="match status" value="1"/>
</dbReference>
<dbReference type="Gene3D" id="3.40.50.150">
    <property type="entry name" value="Vaccinia Virus protein VP39"/>
    <property type="match status" value="1"/>
</dbReference>
<dbReference type="HAMAP" id="MF_01012">
    <property type="entry name" value="23SrRNA_methyltr_RlmC"/>
    <property type="match status" value="1"/>
</dbReference>
<dbReference type="InterPro" id="IPR011825">
    <property type="entry name" value="23SrRNA_MeTrfase_RlmC"/>
</dbReference>
<dbReference type="InterPro" id="IPR030390">
    <property type="entry name" value="MeTrfase_TrmA_AS"/>
</dbReference>
<dbReference type="InterPro" id="IPR030391">
    <property type="entry name" value="MeTrfase_TrmA_CS"/>
</dbReference>
<dbReference type="InterPro" id="IPR029063">
    <property type="entry name" value="SAM-dependent_MTases_sf"/>
</dbReference>
<dbReference type="InterPro" id="IPR010280">
    <property type="entry name" value="U5_MeTrfase_fam"/>
</dbReference>
<dbReference type="NCBIfam" id="TIGR02085">
    <property type="entry name" value="meth_trns_rumB"/>
    <property type="match status" value="1"/>
</dbReference>
<dbReference type="NCBIfam" id="TIGR00479">
    <property type="entry name" value="rumA"/>
    <property type="match status" value="1"/>
</dbReference>
<dbReference type="PANTHER" id="PTHR11061">
    <property type="entry name" value="RNA M5U METHYLTRANSFERASE"/>
    <property type="match status" value="1"/>
</dbReference>
<dbReference type="PANTHER" id="PTHR11061:SF30">
    <property type="entry name" value="TRNA (URACIL(54)-C(5))-METHYLTRANSFERASE"/>
    <property type="match status" value="1"/>
</dbReference>
<dbReference type="Pfam" id="PF05958">
    <property type="entry name" value="tRNA_U5-meth_tr"/>
    <property type="match status" value="1"/>
</dbReference>
<dbReference type="SUPFAM" id="SSF53335">
    <property type="entry name" value="S-adenosyl-L-methionine-dependent methyltransferases"/>
    <property type="match status" value="1"/>
</dbReference>
<dbReference type="PROSITE" id="PS51687">
    <property type="entry name" value="SAM_MT_RNA_M5U"/>
    <property type="match status" value="1"/>
</dbReference>
<dbReference type="PROSITE" id="PS01230">
    <property type="entry name" value="TRMA_1"/>
    <property type="match status" value="1"/>
</dbReference>
<dbReference type="PROSITE" id="PS01231">
    <property type="entry name" value="TRMA_2"/>
    <property type="match status" value="1"/>
</dbReference>
<keyword id="KW-0004">4Fe-4S</keyword>
<keyword id="KW-0408">Iron</keyword>
<keyword id="KW-0411">Iron-sulfur</keyword>
<keyword id="KW-0479">Metal-binding</keyword>
<keyword id="KW-0489">Methyltransferase</keyword>
<keyword id="KW-0698">rRNA processing</keyword>
<keyword id="KW-0949">S-adenosyl-L-methionine</keyword>
<keyword id="KW-0808">Transferase</keyword>
<sequence length="375" mass="42162">MQCAQYTASRCRSCQWLDKPYPQQLADKQNHLENLLSDHRVTQWLSPLFGQESAFRNKAKMVVSGSVERPLLGMLHRDGTPVDLCECPLYPTSFAPVFAVLKTFIARAGLTPYNVARKRGELKFLLLTESTYSGELMLRFVLRSQTKLSQLQAALPWLQQQLPQLAVISVNIQPVHMAILEGEQEMPLTEQQALPEIFNQVPLFIRPQSFFQTNPQVAASLYATARQWVRELKIDSMWDLFCGVGGFGLHCADTETRLTGIEISAEAIACARQSADQLGLKNVTFAALDSTQFATAETQVPQLVLVNPPRRGIGAQLCEYLSQMAPQFILYSSCNAETMAKDISLLADYRIERVQLFDMFPHTAHYEVLSLLIKC</sequence>
<name>RLMC_YERE8</name>
<proteinExistence type="inferred from homology"/>
<accession>A1JM74</accession>
<organism>
    <name type="scientific">Yersinia enterocolitica serotype O:8 / biotype 1B (strain NCTC 13174 / 8081)</name>
    <dbReference type="NCBI Taxonomy" id="393305"/>
    <lineage>
        <taxon>Bacteria</taxon>
        <taxon>Pseudomonadati</taxon>
        <taxon>Pseudomonadota</taxon>
        <taxon>Gammaproteobacteria</taxon>
        <taxon>Enterobacterales</taxon>
        <taxon>Yersiniaceae</taxon>
        <taxon>Yersinia</taxon>
    </lineage>
</organism>
<protein>
    <recommendedName>
        <fullName evidence="1">23S rRNA (uracil(747)-C(5))-methyltransferase RlmC</fullName>
        <ecNumber evidence="1">2.1.1.189</ecNumber>
    </recommendedName>
    <alternativeName>
        <fullName evidence="1">23S rRNA(m5U747)-methyltransferase</fullName>
    </alternativeName>
</protein>
<feature type="chain" id="PRO_1000063009" description="23S rRNA (uracil(747)-C(5))-methyltransferase RlmC">
    <location>
        <begin position="1"/>
        <end position="375"/>
    </location>
</feature>
<feature type="active site" description="Nucleophile" evidence="1">
    <location>
        <position position="334"/>
    </location>
</feature>
<feature type="binding site" evidence="1">
    <location>
        <position position="3"/>
    </location>
    <ligand>
        <name>[4Fe-4S] cluster</name>
        <dbReference type="ChEBI" id="CHEBI:49883"/>
    </ligand>
</feature>
<feature type="binding site" evidence="1">
    <location>
        <position position="11"/>
    </location>
    <ligand>
        <name>[4Fe-4S] cluster</name>
        <dbReference type="ChEBI" id="CHEBI:49883"/>
    </ligand>
</feature>
<feature type="binding site" evidence="1">
    <location>
        <position position="14"/>
    </location>
    <ligand>
        <name>[4Fe-4S] cluster</name>
        <dbReference type="ChEBI" id="CHEBI:49883"/>
    </ligand>
</feature>
<feature type="binding site" evidence="1">
    <location>
        <position position="87"/>
    </location>
    <ligand>
        <name>[4Fe-4S] cluster</name>
        <dbReference type="ChEBI" id="CHEBI:49883"/>
    </ligand>
</feature>
<feature type="binding site" evidence="1">
    <location>
        <position position="212"/>
    </location>
    <ligand>
        <name>S-adenosyl-L-methionine</name>
        <dbReference type="ChEBI" id="CHEBI:59789"/>
    </ligand>
</feature>
<feature type="binding site" evidence="1">
    <location>
        <position position="241"/>
    </location>
    <ligand>
        <name>S-adenosyl-L-methionine</name>
        <dbReference type="ChEBI" id="CHEBI:59789"/>
    </ligand>
</feature>
<feature type="binding site" evidence="1">
    <location>
        <position position="262"/>
    </location>
    <ligand>
        <name>S-adenosyl-L-methionine</name>
        <dbReference type="ChEBI" id="CHEBI:59789"/>
    </ligand>
</feature>
<feature type="binding site" evidence="1">
    <location>
        <position position="307"/>
    </location>
    <ligand>
        <name>S-adenosyl-L-methionine</name>
        <dbReference type="ChEBI" id="CHEBI:59789"/>
    </ligand>
</feature>
<reference key="1">
    <citation type="journal article" date="2006" name="PLoS Genet.">
        <title>The complete genome sequence and comparative genome analysis of the high pathogenicity Yersinia enterocolitica strain 8081.</title>
        <authorList>
            <person name="Thomson N.R."/>
            <person name="Howard S."/>
            <person name="Wren B.W."/>
            <person name="Holden M.T.G."/>
            <person name="Crossman L."/>
            <person name="Challis G.L."/>
            <person name="Churcher C."/>
            <person name="Mungall K."/>
            <person name="Brooks K."/>
            <person name="Chillingworth T."/>
            <person name="Feltwell T."/>
            <person name="Abdellah Z."/>
            <person name="Hauser H."/>
            <person name="Jagels K."/>
            <person name="Maddison M."/>
            <person name="Moule S."/>
            <person name="Sanders M."/>
            <person name="Whitehead S."/>
            <person name="Quail M.A."/>
            <person name="Dougan G."/>
            <person name="Parkhill J."/>
            <person name="Prentice M.B."/>
        </authorList>
    </citation>
    <scope>NUCLEOTIDE SEQUENCE [LARGE SCALE GENOMIC DNA]</scope>
    <source>
        <strain>NCTC 13174 / 8081</strain>
    </source>
</reference>
<comment type="function">
    <text evidence="1">Catalyzes the formation of 5-methyl-uridine at position 747 (m5U747) in 23S rRNA.</text>
</comment>
<comment type="catalytic activity">
    <reaction evidence="1">
        <text>uridine(747) in 23S rRNA + S-adenosyl-L-methionine = 5-methyluridine(747) in 23S rRNA + S-adenosyl-L-homocysteine + H(+)</text>
        <dbReference type="Rhea" id="RHEA:42628"/>
        <dbReference type="Rhea" id="RHEA-COMP:10154"/>
        <dbReference type="Rhea" id="RHEA-COMP:10155"/>
        <dbReference type="ChEBI" id="CHEBI:15378"/>
        <dbReference type="ChEBI" id="CHEBI:57856"/>
        <dbReference type="ChEBI" id="CHEBI:59789"/>
        <dbReference type="ChEBI" id="CHEBI:65315"/>
        <dbReference type="ChEBI" id="CHEBI:74447"/>
        <dbReference type="EC" id="2.1.1.189"/>
    </reaction>
</comment>
<comment type="similarity">
    <text evidence="1">Belongs to the class I-like SAM-binding methyltransferase superfamily. RNA M5U methyltransferase family. RlmC subfamily.</text>
</comment>
<evidence type="ECO:0000255" key="1">
    <source>
        <dbReference type="HAMAP-Rule" id="MF_01012"/>
    </source>
</evidence>
<gene>
    <name evidence="1" type="primary">rlmC</name>
    <name type="synonym">rumB</name>
    <name type="ordered locus">YE1490</name>
</gene>